<keyword id="KW-0997">Cell inner membrane</keyword>
<keyword id="KW-1003">Cell membrane</keyword>
<keyword id="KW-0249">Electron transport</keyword>
<keyword id="KW-0285">Flavoprotein</keyword>
<keyword id="KW-0288">FMN</keyword>
<keyword id="KW-0349">Heme</keyword>
<keyword id="KW-0408">Iron</keyword>
<keyword id="KW-0472">Membrane</keyword>
<keyword id="KW-0479">Metal-binding</keyword>
<keyword id="KW-0812">Transmembrane</keyword>
<keyword id="KW-1133">Transmembrane helix</keyword>
<keyword id="KW-0813">Transport</keyword>
<feature type="chain" id="PRO_0000091586" description="Protein-methionine-sulfoxide reductase heme-binding subunit MsrQ">
    <location>
        <begin position="1"/>
        <end position="218"/>
    </location>
</feature>
<feature type="transmembrane region" description="Helical" evidence="1">
    <location>
        <begin position="14"/>
        <end position="34"/>
    </location>
</feature>
<feature type="transmembrane region" description="Helical" evidence="1">
    <location>
        <begin position="60"/>
        <end position="80"/>
    </location>
</feature>
<feature type="transmembrane region" description="Helical" evidence="1">
    <location>
        <begin position="86"/>
        <end position="106"/>
    </location>
</feature>
<feature type="transmembrane region" description="Helical" evidence="1">
    <location>
        <begin position="121"/>
        <end position="141"/>
    </location>
</feature>
<feature type="transmembrane region" description="Helical" evidence="1">
    <location>
        <begin position="155"/>
        <end position="175"/>
    </location>
</feature>
<name>MSRQ_XANAC</name>
<comment type="function">
    <text evidence="1">Part of the MsrPQ system that repairs oxidized periplasmic proteins containing methionine sulfoxide residues (Met-O), using respiratory chain electrons. Thus protects these proteins from oxidative-stress damage caused by reactive species of oxygen and chlorine generated by the host defense mechanisms. MsrPQ is essential for the maintenance of envelope integrity under bleach stress, rescuing a wide series of structurally unrelated periplasmic proteins from methionine oxidation. MsrQ provides electrons for reduction to the reductase catalytic subunit MsrP, using the quinone pool of the respiratory chain.</text>
</comment>
<comment type="cofactor">
    <cofactor evidence="1">
        <name>FMN</name>
        <dbReference type="ChEBI" id="CHEBI:58210"/>
    </cofactor>
    <text evidence="1">Binds 1 FMN per subunit.</text>
</comment>
<comment type="cofactor">
    <cofactor evidence="1">
        <name>heme b</name>
        <dbReference type="ChEBI" id="CHEBI:60344"/>
    </cofactor>
    <text evidence="1">Binds 1 heme b (iron(II)-protoporphyrin IX) group per subunit.</text>
</comment>
<comment type="subunit">
    <text evidence="1">Heterodimer of a catalytic subunit (MsrP) and a heme-binding subunit (MsrQ).</text>
</comment>
<comment type="subcellular location">
    <subcellularLocation>
        <location evidence="1">Cell inner membrane</location>
        <topology evidence="1">Multi-pass membrane protein</topology>
    </subcellularLocation>
</comment>
<comment type="similarity">
    <text evidence="1">Belongs to the MsrQ family.</text>
</comment>
<reference key="1">
    <citation type="journal article" date="2002" name="Nature">
        <title>Comparison of the genomes of two Xanthomonas pathogens with differing host specificities.</title>
        <authorList>
            <person name="da Silva A.C.R."/>
            <person name="Ferro J.A."/>
            <person name="Reinach F.C."/>
            <person name="Farah C.S."/>
            <person name="Furlan L.R."/>
            <person name="Quaggio R.B."/>
            <person name="Monteiro-Vitorello C.B."/>
            <person name="Van Sluys M.A."/>
            <person name="Almeida N.F. Jr."/>
            <person name="Alves L.M.C."/>
            <person name="do Amaral A.M."/>
            <person name="Bertolini M.C."/>
            <person name="Camargo L.E.A."/>
            <person name="Camarotte G."/>
            <person name="Cannavan F."/>
            <person name="Cardozo J."/>
            <person name="Chambergo F."/>
            <person name="Ciapina L.P."/>
            <person name="Cicarelli R.M.B."/>
            <person name="Coutinho L.L."/>
            <person name="Cursino-Santos J.R."/>
            <person name="El-Dorry H."/>
            <person name="Faria J.B."/>
            <person name="Ferreira A.J.S."/>
            <person name="Ferreira R.C.C."/>
            <person name="Ferro M.I.T."/>
            <person name="Formighieri E.F."/>
            <person name="Franco M.C."/>
            <person name="Greggio C.C."/>
            <person name="Gruber A."/>
            <person name="Katsuyama A.M."/>
            <person name="Kishi L.T."/>
            <person name="Leite R.P."/>
            <person name="Lemos E.G.M."/>
            <person name="Lemos M.V.F."/>
            <person name="Locali E.C."/>
            <person name="Machado M.A."/>
            <person name="Madeira A.M.B.N."/>
            <person name="Martinez-Rossi N.M."/>
            <person name="Martins E.C."/>
            <person name="Meidanis J."/>
            <person name="Menck C.F.M."/>
            <person name="Miyaki C.Y."/>
            <person name="Moon D.H."/>
            <person name="Moreira L.M."/>
            <person name="Novo M.T.M."/>
            <person name="Okura V.K."/>
            <person name="Oliveira M.C."/>
            <person name="Oliveira V.R."/>
            <person name="Pereira H.A."/>
            <person name="Rossi A."/>
            <person name="Sena J.A.D."/>
            <person name="Silva C."/>
            <person name="de Souza R.F."/>
            <person name="Spinola L.A.F."/>
            <person name="Takita M.A."/>
            <person name="Tamura R.E."/>
            <person name="Teixeira E.C."/>
            <person name="Tezza R.I.D."/>
            <person name="Trindade dos Santos M."/>
            <person name="Truffi D."/>
            <person name="Tsai S.M."/>
            <person name="White F.F."/>
            <person name="Setubal J.C."/>
            <person name="Kitajima J.P."/>
        </authorList>
    </citation>
    <scope>NUCLEOTIDE SEQUENCE [LARGE SCALE GENOMIC DNA]</scope>
    <source>
        <strain>306</strain>
    </source>
</reference>
<sequence length="218" mass="24768">MAKTSTSVIAAKTLVHAAALAPIALLGWQFWQVWQSGSDALGADPVAEIEHRTGLWALRLLLITLAITPLRQLTGQAVVIRFRRMLGLYAFFYATVHLAAYLTLDLRGFWTQIFEEILKRPYITVGFAAWLLLMPLAITSTQGWMRRLKRNWGRLHMLIYPIGLLAVLHFWWLVKSDIREPALYAGILAVLLGWRVWKKLSARQTTARRSTPPPATPR</sequence>
<evidence type="ECO:0000255" key="1">
    <source>
        <dbReference type="HAMAP-Rule" id="MF_01207"/>
    </source>
</evidence>
<gene>
    <name evidence="1" type="primary">msrQ</name>
    <name type="ordered locus">XAC1646</name>
</gene>
<accession>Q8PLY9</accession>
<organism>
    <name type="scientific">Xanthomonas axonopodis pv. citri (strain 306)</name>
    <dbReference type="NCBI Taxonomy" id="190486"/>
    <lineage>
        <taxon>Bacteria</taxon>
        <taxon>Pseudomonadati</taxon>
        <taxon>Pseudomonadota</taxon>
        <taxon>Gammaproteobacteria</taxon>
        <taxon>Lysobacterales</taxon>
        <taxon>Lysobacteraceae</taxon>
        <taxon>Xanthomonas</taxon>
    </lineage>
</organism>
<dbReference type="EMBL" id="AE008923">
    <property type="protein sequence ID" value="AAM36514.1"/>
    <property type="molecule type" value="Genomic_DNA"/>
</dbReference>
<dbReference type="RefSeq" id="WP_011051054.1">
    <property type="nucleotide sequence ID" value="NC_003919.1"/>
</dbReference>
<dbReference type="SMR" id="Q8PLY9"/>
<dbReference type="GeneID" id="66910804"/>
<dbReference type="KEGG" id="xac:XAC1646"/>
<dbReference type="eggNOG" id="COG2717">
    <property type="taxonomic scope" value="Bacteria"/>
</dbReference>
<dbReference type="HOGENOM" id="CLU_080662_0_1_6"/>
<dbReference type="Proteomes" id="UP000000576">
    <property type="component" value="Chromosome"/>
</dbReference>
<dbReference type="GO" id="GO:0005886">
    <property type="term" value="C:plasma membrane"/>
    <property type="evidence" value="ECO:0007669"/>
    <property type="project" value="UniProtKB-SubCell"/>
</dbReference>
<dbReference type="GO" id="GO:0009055">
    <property type="term" value="F:electron transfer activity"/>
    <property type="evidence" value="ECO:0007669"/>
    <property type="project" value="UniProtKB-UniRule"/>
</dbReference>
<dbReference type="GO" id="GO:0010181">
    <property type="term" value="F:FMN binding"/>
    <property type="evidence" value="ECO:0007669"/>
    <property type="project" value="UniProtKB-UniRule"/>
</dbReference>
<dbReference type="GO" id="GO:0020037">
    <property type="term" value="F:heme binding"/>
    <property type="evidence" value="ECO:0007669"/>
    <property type="project" value="UniProtKB-UniRule"/>
</dbReference>
<dbReference type="GO" id="GO:0046872">
    <property type="term" value="F:metal ion binding"/>
    <property type="evidence" value="ECO:0007669"/>
    <property type="project" value="UniProtKB-KW"/>
</dbReference>
<dbReference type="GO" id="GO:0016679">
    <property type="term" value="F:oxidoreductase activity, acting on diphenols and related substances as donors"/>
    <property type="evidence" value="ECO:0007669"/>
    <property type="project" value="TreeGrafter"/>
</dbReference>
<dbReference type="GO" id="GO:0030091">
    <property type="term" value="P:protein repair"/>
    <property type="evidence" value="ECO:0007669"/>
    <property type="project" value="UniProtKB-UniRule"/>
</dbReference>
<dbReference type="HAMAP" id="MF_01207">
    <property type="entry name" value="MsrQ"/>
    <property type="match status" value="1"/>
</dbReference>
<dbReference type="InterPro" id="IPR013130">
    <property type="entry name" value="Fe3_Rdtase_TM_dom"/>
</dbReference>
<dbReference type="InterPro" id="IPR022837">
    <property type="entry name" value="MsrQ-like"/>
</dbReference>
<dbReference type="NCBIfam" id="NF003835">
    <property type="entry name" value="PRK05419.2-2"/>
    <property type="match status" value="1"/>
</dbReference>
<dbReference type="PANTHER" id="PTHR36964">
    <property type="entry name" value="PROTEIN-METHIONINE-SULFOXIDE REDUCTASE HEME-BINDING SUBUNIT MSRQ"/>
    <property type="match status" value="1"/>
</dbReference>
<dbReference type="PANTHER" id="PTHR36964:SF1">
    <property type="entry name" value="PROTEIN-METHIONINE-SULFOXIDE REDUCTASE HEME-BINDING SUBUNIT MSRQ"/>
    <property type="match status" value="1"/>
</dbReference>
<dbReference type="Pfam" id="PF01794">
    <property type="entry name" value="Ferric_reduct"/>
    <property type="match status" value="1"/>
</dbReference>
<protein>
    <recommendedName>
        <fullName evidence="1">Protein-methionine-sulfoxide reductase heme-binding subunit MsrQ</fullName>
    </recommendedName>
    <alternativeName>
        <fullName evidence="1">Flavocytochrome MsrQ</fullName>
    </alternativeName>
</protein>
<proteinExistence type="inferred from homology"/>